<protein>
    <recommendedName>
        <fullName evidence="1">4-hydroxybenzoate octaprenyltransferase</fullName>
        <ecNumber evidence="1">2.5.1.39</ecNumber>
    </recommendedName>
    <alternativeName>
        <fullName evidence="1">4-HB polyprenyltransferase</fullName>
    </alternativeName>
</protein>
<name>UBIA_ECOLU</name>
<comment type="function">
    <text evidence="1">Catalyzes the prenylation of para-hydroxybenzoate (PHB) with an all-trans polyprenyl group. Mediates the second step in the final reaction sequence of ubiquinone-8 (UQ-8) biosynthesis, which is the condensation of the polyisoprenoid side chain with PHB, generating the first membrane-bound Q intermediate 3-octaprenyl-4-hydroxybenzoate.</text>
</comment>
<comment type="catalytic activity">
    <reaction evidence="1">
        <text>all-trans-octaprenyl diphosphate + 4-hydroxybenzoate = 4-hydroxy-3-(all-trans-octaprenyl)benzoate + diphosphate</text>
        <dbReference type="Rhea" id="RHEA:27782"/>
        <dbReference type="ChEBI" id="CHEBI:1617"/>
        <dbReference type="ChEBI" id="CHEBI:17879"/>
        <dbReference type="ChEBI" id="CHEBI:33019"/>
        <dbReference type="ChEBI" id="CHEBI:57711"/>
        <dbReference type="EC" id="2.5.1.39"/>
    </reaction>
</comment>
<comment type="cofactor">
    <cofactor evidence="1">
        <name>Mg(2+)</name>
        <dbReference type="ChEBI" id="CHEBI:18420"/>
    </cofactor>
</comment>
<comment type="pathway">
    <text evidence="1">Cofactor biosynthesis; ubiquinone biosynthesis.</text>
</comment>
<comment type="subcellular location">
    <subcellularLocation>
        <location evidence="1">Cell inner membrane</location>
        <topology evidence="1">Multi-pass membrane protein</topology>
    </subcellularLocation>
</comment>
<comment type="similarity">
    <text evidence="1">Belongs to the UbiA prenyltransferase family.</text>
</comment>
<proteinExistence type="inferred from homology"/>
<reference key="1">
    <citation type="journal article" date="2009" name="PLoS Genet.">
        <title>Organised genome dynamics in the Escherichia coli species results in highly diverse adaptive paths.</title>
        <authorList>
            <person name="Touchon M."/>
            <person name="Hoede C."/>
            <person name="Tenaillon O."/>
            <person name="Barbe V."/>
            <person name="Baeriswyl S."/>
            <person name="Bidet P."/>
            <person name="Bingen E."/>
            <person name="Bonacorsi S."/>
            <person name="Bouchier C."/>
            <person name="Bouvet O."/>
            <person name="Calteau A."/>
            <person name="Chiapello H."/>
            <person name="Clermont O."/>
            <person name="Cruveiller S."/>
            <person name="Danchin A."/>
            <person name="Diard M."/>
            <person name="Dossat C."/>
            <person name="Karoui M.E."/>
            <person name="Frapy E."/>
            <person name="Garry L."/>
            <person name="Ghigo J.M."/>
            <person name="Gilles A.M."/>
            <person name="Johnson J."/>
            <person name="Le Bouguenec C."/>
            <person name="Lescat M."/>
            <person name="Mangenot S."/>
            <person name="Martinez-Jehanne V."/>
            <person name="Matic I."/>
            <person name="Nassif X."/>
            <person name="Oztas S."/>
            <person name="Petit M.A."/>
            <person name="Pichon C."/>
            <person name="Rouy Z."/>
            <person name="Ruf C.S."/>
            <person name="Schneider D."/>
            <person name="Tourret J."/>
            <person name="Vacherie B."/>
            <person name="Vallenet D."/>
            <person name="Medigue C."/>
            <person name="Rocha E.P.C."/>
            <person name="Denamur E."/>
        </authorList>
    </citation>
    <scope>NUCLEOTIDE SEQUENCE [LARGE SCALE GENOMIC DNA]</scope>
    <source>
        <strain>UMN026 / ExPEC</strain>
    </source>
</reference>
<evidence type="ECO:0000255" key="1">
    <source>
        <dbReference type="HAMAP-Rule" id="MF_01635"/>
    </source>
</evidence>
<keyword id="KW-0997">Cell inner membrane</keyword>
<keyword id="KW-1003">Cell membrane</keyword>
<keyword id="KW-0460">Magnesium</keyword>
<keyword id="KW-0472">Membrane</keyword>
<keyword id="KW-0808">Transferase</keyword>
<keyword id="KW-0812">Transmembrane</keyword>
<keyword id="KW-1133">Transmembrane helix</keyword>
<keyword id="KW-0831">Ubiquinone biosynthesis</keyword>
<organism>
    <name type="scientific">Escherichia coli O17:K52:H18 (strain UMN026 / ExPEC)</name>
    <dbReference type="NCBI Taxonomy" id="585056"/>
    <lineage>
        <taxon>Bacteria</taxon>
        <taxon>Pseudomonadati</taxon>
        <taxon>Pseudomonadota</taxon>
        <taxon>Gammaproteobacteria</taxon>
        <taxon>Enterobacterales</taxon>
        <taxon>Enterobacteriaceae</taxon>
        <taxon>Escherichia</taxon>
    </lineage>
</organism>
<dbReference type="EC" id="2.5.1.39" evidence="1"/>
<dbReference type="EMBL" id="CU928163">
    <property type="protein sequence ID" value="CAR15691.1"/>
    <property type="molecule type" value="Genomic_DNA"/>
</dbReference>
<dbReference type="RefSeq" id="WP_000455227.1">
    <property type="nucleotide sequence ID" value="NC_011751.1"/>
</dbReference>
<dbReference type="RefSeq" id="YP_002415181.1">
    <property type="nucleotide sequence ID" value="NC_011751.1"/>
</dbReference>
<dbReference type="SMR" id="B7NFY4"/>
<dbReference type="STRING" id="585056.ECUMN_4574"/>
<dbReference type="GeneID" id="93777791"/>
<dbReference type="KEGG" id="eum:ECUMN_4574"/>
<dbReference type="PATRIC" id="fig|585056.7.peg.4737"/>
<dbReference type="HOGENOM" id="CLU_034879_1_0_6"/>
<dbReference type="UniPathway" id="UPA00232"/>
<dbReference type="Proteomes" id="UP000007097">
    <property type="component" value="Chromosome"/>
</dbReference>
<dbReference type="GO" id="GO:0005886">
    <property type="term" value="C:plasma membrane"/>
    <property type="evidence" value="ECO:0007669"/>
    <property type="project" value="UniProtKB-SubCell"/>
</dbReference>
<dbReference type="GO" id="GO:0008412">
    <property type="term" value="F:4-hydroxybenzoate polyprenyltransferase activity"/>
    <property type="evidence" value="ECO:0007669"/>
    <property type="project" value="UniProtKB-UniRule"/>
</dbReference>
<dbReference type="GO" id="GO:0006744">
    <property type="term" value="P:ubiquinone biosynthetic process"/>
    <property type="evidence" value="ECO:0007669"/>
    <property type="project" value="UniProtKB-UniRule"/>
</dbReference>
<dbReference type="CDD" id="cd13959">
    <property type="entry name" value="PT_UbiA_COQ2"/>
    <property type="match status" value="1"/>
</dbReference>
<dbReference type="FunFam" id="1.10.357.140:FF:000002">
    <property type="entry name" value="4-hydroxybenzoate octaprenyltransferase"/>
    <property type="match status" value="1"/>
</dbReference>
<dbReference type="FunFam" id="1.20.120.1780:FF:000001">
    <property type="entry name" value="4-hydroxybenzoate octaprenyltransferase"/>
    <property type="match status" value="1"/>
</dbReference>
<dbReference type="Gene3D" id="1.10.357.140">
    <property type="entry name" value="UbiA prenyltransferase"/>
    <property type="match status" value="1"/>
</dbReference>
<dbReference type="Gene3D" id="1.20.120.1780">
    <property type="entry name" value="UbiA prenyltransferase"/>
    <property type="match status" value="1"/>
</dbReference>
<dbReference type="HAMAP" id="MF_01635">
    <property type="entry name" value="UbiA"/>
    <property type="match status" value="1"/>
</dbReference>
<dbReference type="InterPro" id="IPR006370">
    <property type="entry name" value="HB_polyprenyltransferase-like"/>
</dbReference>
<dbReference type="InterPro" id="IPR039653">
    <property type="entry name" value="Prenyltransferase"/>
</dbReference>
<dbReference type="InterPro" id="IPR000537">
    <property type="entry name" value="UbiA_prenyltransferase"/>
</dbReference>
<dbReference type="InterPro" id="IPR030470">
    <property type="entry name" value="UbiA_prenylTrfase_CS"/>
</dbReference>
<dbReference type="InterPro" id="IPR044878">
    <property type="entry name" value="UbiA_sf"/>
</dbReference>
<dbReference type="NCBIfam" id="TIGR01474">
    <property type="entry name" value="ubiA_proteo"/>
    <property type="match status" value="1"/>
</dbReference>
<dbReference type="PANTHER" id="PTHR11048:SF28">
    <property type="entry name" value="4-HYDROXYBENZOATE POLYPRENYLTRANSFERASE, MITOCHONDRIAL"/>
    <property type="match status" value="1"/>
</dbReference>
<dbReference type="PANTHER" id="PTHR11048">
    <property type="entry name" value="PRENYLTRANSFERASES"/>
    <property type="match status" value="1"/>
</dbReference>
<dbReference type="Pfam" id="PF01040">
    <property type="entry name" value="UbiA"/>
    <property type="match status" value="1"/>
</dbReference>
<dbReference type="PROSITE" id="PS00943">
    <property type="entry name" value="UBIA"/>
    <property type="match status" value="1"/>
</dbReference>
<accession>B7NFY4</accession>
<gene>
    <name evidence="1" type="primary">ubiA</name>
    <name type="ordered locus">ECUMN_4574</name>
</gene>
<sequence length="290" mass="32512">MEWSLTQNKLLAFHRLMRTDKPIGALLLLWPTLWALWVATPGVPQLWILAVFVAGVWLMRAAGCVVNDYADRKFDGHVKRTANRPLPSGAVTEKEARALFVVLVLISFLLVLTLNTMTILLSIAALALAWVYPFMKRYTHLPQVVLGAAFGWSIPMAFAAVSESVPLSCWLMFLANILWAVAYDTQYAMVDRDDDVKIGIKSTAILFGQYDKLIIGILQIGVLALMAIIGELNGLGWGYYWSILVAGALFVYQQKLIANREREACFKAFMNNNYVGLVLFLGLAMSYWHF</sequence>
<feature type="chain" id="PRO_1000186671" description="4-hydroxybenzoate octaprenyltransferase">
    <location>
        <begin position="1"/>
        <end position="290"/>
    </location>
</feature>
<feature type="transmembrane region" description="Helical" evidence="1">
    <location>
        <begin position="23"/>
        <end position="43"/>
    </location>
</feature>
<feature type="transmembrane region" description="Helical" evidence="1">
    <location>
        <begin position="46"/>
        <end position="66"/>
    </location>
</feature>
<feature type="transmembrane region" description="Helical" evidence="1">
    <location>
        <begin position="99"/>
        <end position="119"/>
    </location>
</feature>
<feature type="transmembrane region" description="Helical" evidence="1">
    <location>
        <begin position="141"/>
        <end position="161"/>
    </location>
</feature>
<feature type="transmembrane region" description="Helical" evidence="1">
    <location>
        <begin position="163"/>
        <end position="183"/>
    </location>
</feature>
<feature type="transmembrane region" description="Helical" evidence="1">
    <location>
        <begin position="213"/>
        <end position="233"/>
    </location>
</feature>
<feature type="transmembrane region" description="Helical" evidence="1">
    <location>
        <begin position="234"/>
        <end position="254"/>
    </location>
</feature>
<feature type="transmembrane region" description="Helical" evidence="1">
    <location>
        <begin position="268"/>
        <end position="288"/>
    </location>
</feature>